<evidence type="ECO:0000250" key="1">
    <source>
        <dbReference type="UniProtKB" id="Q2EEY0"/>
    </source>
</evidence>
<evidence type="ECO:0000250" key="2">
    <source>
        <dbReference type="UniProtKB" id="Q9EQU3"/>
    </source>
</evidence>
<evidence type="ECO:0000255" key="3"/>
<evidence type="ECO:0000255" key="4">
    <source>
        <dbReference type="PROSITE-ProRule" id="PRU00204"/>
    </source>
</evidence>
<evidence type="ECO:0000269" key="5">
    <source>
    </source>
</evidence>
<evidence type="ECO:0000269" key="6">
    <source>
    </source>
</evidence>
<evidence type="ECO:0000269" key="7">
    <source>
    </source>
</evidence>
<evidence type="ECO:0000269" key="8">
    <source>
    </source>
</evidence>
<evidence type="ECO:0000269" key="9">
    <source>
    </source>
</evidence>
<evidence type="ECO:0000269" key="10">
    <source>
    </source>
</evidence>
<evidence type="ECO:0000269" key="11">
    <source>
    </source>
</evidence>
<evidence type="ECO:0000303" key="12">
    <source>
    </source>
</evidence>
<evidence type="ECO:0000303" key="13">
    <source>
    </source>
</evidence>
<evidence type="ECO:0000305" key="14"/>
<evidence type="ECO:0007829" key="15">
    <source>
        <dbReference type="PDB" id="8AR3"/>
    </source>
</evidence>
<keyword id="KW-0002">3D-structure</keyword>
<keyword id="KW-0025">Alternative splicing</keyword>
<keyword id="KW-0968">Cytoplasmic vesicle</keyword>
<keyword id="KW-1015">Disulfide bond</keyword>
<keyword id="KW-0256">Endoplasmic reticulum</keyword>
<keyword id="KW-0967">Endosome</keyword>
<keyword id="KW-0325">Glycoprotein</keyword>
<keyword id="KW-0333">Golgi apparatus</keyword>
<keyword id="KW-0391">Immunity</keyword>
<keyword id="KW-0395">Inflammatory response</keyword>
<keyword id="KW-0399">Innate immunity</keyword>
<keyword id="KW-0433">Leucine-rich repeat</keyword>
<keyword id="KW-0449">Lipoprotein</keyword>
<keyword id="KW-0458">Lysosome</keyword>
<keyword id="KW-0472">Membrane</keyword>
<keyword id="KW-0564">Palmitate</keyword>
<keyword id="KW-1267">Proteomics identification</keyword>
<keyword id="KW-0675">Receptor</keyword>
<keyword id="KW-1185">Reference proteome</keyword>
<keyword id="KW-0677">Repeat</keyword>
<keyword id="KW-0732">Signal</keyword>
<keyword id="KW-0812">Transmembrane</keyword>
<keyword id="KW-1133">Transmembrane helix</keyword>
<protein>
    <recommendedName>
        <fullName>Toll-like receptor 9</fullName>
    </recommendedName>
    <cdAntigenName>CD289</cdAntigenName>
</protein>
<comment type="function">
    <text evidence="2 5 6 8 10">Key component of innate and adaptive immunity. TLRs (Toll-like receptors) control host immune response against pathogens through recognition of molecular patterns specific to microorganisms. TLR9 is a nucleotide-sensing TLR which is activated by unmethylated cytidine-phosphate-guanosine (CpG) dinucleotides (PubMed:14716310). Acts via MYD88 and TRAF6, leading to NF-kappa-B activation, cytokine secretion and the inflammatory response (PubMed:11564765, PubMed:17932028). Controls lymphocyte response to Helicobacter infection (By similarity). Upon CpG stimulation, induces B-cell proliferation, activation, survival and antibody production (PubMed:23857366).</text>
</comment>
<comment type="subunit">
    <text evidence="1 2 8 9">Monomer and homodimer. Exists as a monomer in the absence of unmethylated cytidine-phosphate-guanosine (CpG) ligand. Proteolytic processing of an insertion loop (Z-loop) is required for homodimerization upon binding to the unmethylated CpG ligand leading to its activation (By similarity). Interacts with MYD88 via their respective TIR domains (By similarity). Interacts with BTK (PubMed:17932028). Interacts (via transmembrane domain) with UNC93B1. Interacts with CD300LH; the interaction may promote full activation of TLR9-triggered innate responses (By similarity). Interacts with CNPY3 and HSP90B1; this interaction is required for proper folding in the endoplasmic reticulum (PubMed:20865800). Interacts with SMPDL3B (By similarity). Interacts with CD82; this interaction is essential for TLR9-dependent myddosome formation in response to CpG stimulation (By similarity).</text>
</comment>
<comment type="subcellular location">
    <subcellularLocation>
        <location evidence="6">Endoplasmic reticulum membrane</location>
        <topology evidence="2">Single-pass type I membrane protein</topology>
    </subcellularLocation>
    <subcellularLocation>
        <location evidence="6">Early endosome membrane</location>
    </subcellularLocation>
    <subcellularLocation>
        <location evidence="2">Lysosome</location>
    </subcellularLocation>
    <subcellularLocation>
        <location evidence="2">Cytoplasmic vesicle</location>
        <location evidence="2">Phagosome</location>
    </subcellularLocation>
    <subcellularLocation>
        <location evidence="11">Golgi apparatus membrane</location>
    </subcellularLocation>
    <text evidence="2 6 11">Relocalizes from endoplasmic reticulum to endosome and lysosome upon stimulation with agonist. Exit from the ER requires UNC93B1. Endolysosomal localization is required for proteolytic cleavage and subsequent activation. Intracellular localization of the active receptor may prevent from responding to self nucleic acid.</text>
</comment>
<comment type="alternative products">
    <event type="alternative splicing"/>
    <isoform>
        <id>Q9NR96-1</id>
        <name>1</name>
        <name>A</name>
        <sequence type="displayed"/>
    </isoform>
    <isoform>
        <id>Q9NR96-2</id>
        <name>2</name>
        <name>B</name>
        <sequence type="described" ref="VSP_006520"/>
    </isoform>
    <isoform>
        <id>Q9NR96-3</id>
        <name>3</name>
        <sequence type="described" ref="VSP_006521"/>
    </isoform>
    <isoform>
        <id>Q9NR96-4</id>
        <name>4</name>
        <sequence type="described" ref="VSP_006522"/>
    </isoform>
    <isoform>
        <id>Q9NR96-5</id>
        <name>5</name>
        <sequence type="described" ref="VSP_006523"/>
    </isoform>
    <text>Additional isoforms seem to exist.</text>
</comment>
<comment type="tissue specificity">
    <text>Highly expressed in spleen, lymph node, tonsil and peripheral blood leukocytes, especially in plasmacytoid pre-dendritic cells. Levels are much lower in monocytes and CD11c+ immature dendritic cells. Also detected in lung and liver.</text>
</comment>
<comment type="PTM">
    <text evidence="2">Activated by proteolytic cleavage of the flexible loop between repeats LRR14 and LRR15 within the ectodomain. Cleavage requires UNC93B1. Proteolytically processed by first removing the majority of the ectodomain by either asparagine endopeptidase (AEP) or a cathepsin followed by a trimming event that is solely cathepsin mediated and required for optimal receptor signaling.</text>
</comment>
<comment type="PTM">
    <text evidence="11">Palmitoylated by ZDHHC3 in the Golgi regulates TLR9 trafficking from the Golgi to endosomes. Depalmitoylation by PPT1 controls the release of TLR9 from UNC93B1 in endosomes.</text>
</comment>
<comment type="similarity">
    <text evidence="14">Belongs to the Toll-like receptor family.</text>
</comment>
<feature type="signal peptide" evidence="3">
    <location>
        <begin position="1"/>
        <end position="25"/>
    </location>
</feature>
<feature type="chain" id="PRO_0000034737" description="Toll-like receptor 9">
    <location>
        <begin position="26"/>
        <end position="1032"/>
    </location>
</feature>
<feature type="topological domain" description="Extracellular" evidence="3">
    <location>
        <begin position="26"/>
        <end position="818"/>
    </location>
</feature>
<feature type="transmembrane region" description="Helical" evidence="3">
    <location>
        <begin position="819"/>
        <end position="839"/>
    </location>
</feature>
<feature type="topological domain" description="Cytoplasmic" evidence="3">
    <location>
        <begin position="840"/>
        <end position="1032"/>
    </location>
</feature>
<feature type="repeat" description="LRR 1">
    <location>
        <begin position="62"/>
        <end position="85"/>
    </location>
</feature>
<feature type="repeat" description="LRR 2">
    <location>
        <begin position="87"/>
        <end position="110"/>
    </location>
</feature>
<feature type="repeat" description="LRR 3">
    <location>
        <begin position="122"/>
        <end position="147"/>
    </location>
</feature>
<feature type="repeat" description="LRR 4">
    <location>
        <begin position="150"/>
        <end position="166"/>
    </location>
</feature>
<feature type="repeat" description="LRR 5">
    <location>
        <begin position="167"/>
        <end position="190"/>
    </location>
</feature>
<feature type="repeat" description="LRR 6">
    <location>
        <begin position="198"/>
        <end position="221"/>
    </location>
</feature>
<feature type="repeat" description="LRR 7">
    <location>
        <begin position="223"/>
        <end position="242"/>
    </location>
</feature>
<feature type="repeat" description="LRR 8">
    <location>
        <begin position="243"/>
        <end position="268"/>
    </location>
</feature>
<feature type="repeat" description="LRR 9">
    <location>
        <begin position="283"/>
        <end position="306"/>
    </location>
</feature>
<feature type="repeat" description="LRR 10">
    <location>
        <begin position="308"/>
        <end position="332"/>
    </location>
</feature>
<feature type="repeat" description="LRR 11">
    <location>
        <begin position="333"/>
        <end position="356"/>
    </location>
</feature>
<feature type="repeat" description="LRR 12">
    <location>
        <begin position="363"/>
        <end position="386"/>
    </location>
</feature>
<feature type="repeat" description="LRR 13">
    <location>
        <begin position="390"/>
        <end position="413"/>
    </location>
</feature>
<feature type="repeat" description="LRR 14">
    <location>
        <begin position="415"/>
        <end position="440"/>
    </location>
</feature>
<feature type="repeat" description="LRR 15">
    <location>
        <begin position="470"/>
        <end position="494"/>
    </location>
</feature>
<feature type="repeat" description="LRR 16">
    <location>
        <begin position="496"/>
        <end position="519"/>
    </location>
</feature>
<feature type="repeat" description="LRR 17">
    <location>
        <begin position="520"/>
        <end position="543"/>
    </location>
</feature>
<feature type="repeat" description="LRR 18">
    <location>
        <begin position="545"/>
        <end position="572"/>
    </location>
</feature>
<feature type="repeat" description="LRR 19">
    <location>
        <begin position="574"/>
        <end position="598"/>
    </location>
</feature>
<feature type="repeat" description="LRR 20">
    <location>
        <begin position="600"/>
        <end position="622"/>
    </location>
</feature>
<feature type="repeat" description="LRR 21">
    <location>
        <begin position="627"/>
        <end position="650"/>
    </location>
</feature>
<feature type="repeat" description="LRR 22">
    <location>
        <begin position="652"/>
        <end position="675"/>
    </location>
</feature>
<feature type="repeat" description="LRR 23">
    <location>
        <begin position="676"/>
        <end position="699"/>
    </location>
</feature>
<feature type="repeat" description="LRR 24">
    <location>
        <begin position="701"/>
        <end position="723"/>
    </location>
</feature>
<feature type="repeat" description="LRR 25">
    <location>
        <begin position="724"/>
        <end position="747"/>
    </location>
</feature>
<feature type="repeat" description="LRR 26">
    <location>
        <begin position="749"/>
        <end position="772"/>
    </location>
</feature>
<feature type="domain" description="TIR" evidence="4">
    <location>
        <begin position="868"/>
        <end position="1013"/>
    </location>
</feature>
<feature type="binding site" evidence="1">
    <location>
        <begin position="47"/>
        <end position="51"/>
    </location>
    <ligand>
        <name>DNA</name>
        <dbReference type="ChEBI" id="CHEBI:16991"/>
        <note>CpG-containing DNA</note>
    </ligand>
</feature>
<feature type="binding site" evidence="1">
    <location>
        <begin position="72"/>
        <end position="77"/>
    </location>
    <ligand>
        <name>DNA</name>
        <dbReference type="ChEBI" id="CHEBI:16991"/>
        <note>CpG-containing DNA</note>
    </ligand>
</feature>
<feature type="binding site" evidence="1">
    <location>
        <begin position="95"/>
        <end position="109"/>
    </location>
    <ligand>
        <name>DNA</name>
        <dbReference type="ChEBI" id="CHEBI:16991"/>
        <note>CpG-containing DNA</note>
    </ligand>
</feature>
<feature type="binding site" evidence="1">
    <location>
        <position position="132"/>
    </location>
    <ligand>
        <name>DNA</name>
        <dbReference type="ChEBI" id="CHEBI:16991"/>
        <note>CpG-containing DNA</note>
    </ligand>
</feature>
<feature type="binding site" evidence="1">
    <location>
        <begin position="179"/>
        <end position="181"/>
    </location>
    <ligand>
        <name>DNA</name>
        <dbReference type="ChEBI" id="CHEBI:16991"/>
        <note>CpG-containing DNA</note>
    </ligand>
</feature>
<feature type="binding site" evidence="1">
    <location>
        <position position="208"/>
    </location>
    <ligand>
        <name>DNA</name>
        <dbReference type="ChEBI" id="CHEBI:16991"/>
        <note>CpG-containing DNA</note>
    </ligand>
</feature>
<feature type="lipid moiety-binding region" description="S-palmitoyl cysteine" evidence="11">
    <location>
        <position position="258"/>
    </location>
</feature>
<feature type="lipid moiety-binding region" description="S-palmitoyl cysteine" evidence="11">
    <location>
        <position position="265"/>
    </location>
</feature>
<feature type="glycosylation site" description="N-linked (GlcNAc...) asparagine" evidence="3">
    <location>
        <position position="64"/>
    </location>
</feature>
<feature type="glycosylation site" description="N-linked (GlcNAc...) asparagine" evidence="3">
    <location>
        <position position="129"/>
    </location>
</feature>
<feature type="glycosylation site" description="N-linked (GlcNAc...) asparagine" evidence="3">
    <location>
        <position position="200"/>
    </location>
</feature>
<feature type="glycosylation site" description="N-linked (GlcNAc...) asparagine" evidence="3">
    <location>
        <position position="210"/>
    </location>
</feature>
<feature type="glycosylation site" description="N-linked (GlcNAc...) asparagine" evidence="3">
    <location>
        <position position="242"/>
    </location>
</feature>
<feature type="glycosylation site" description="N-linked (GlcNAc...) asparagine" evidence="3">
    <location>
        <position position="300"/>
    </location>
</feature>
<feature type="glycosylation site" description="N-linked (GlcNAc...) asparagine" evidence="3">
    <location>
        <position position="340"/>
    </location>
</feature>
<feature type="glycosylation site" description="N-linked (GlcNAc...) asparagine" evidence="3">
    <location>
        <position position="469"/>
    </location>
</feature>
<feature type="glycosylation site" description="N-linked (GlcNAc...) asparagine" evidence="3">
    <location>
        <position position="474"/>
    </location>
</feature>
<feature type="glycosylation site" description="N-linked (GlcNAc...) asparagine" evidence="3">
    <location>
        <position position="513"/>
    </location>
</feature>
<feature type="glycosylation site" description="N-linked (GlcNAc...) asparagine" evidence="3">
    <location>
        <position position="567"/>
    </location>
</feature>
<feature type="glycosylation site" description="N-linked (GlcNAc...) asparagine" evidence="3">
    <location>
        <position position="694"/>
    </location>
</feature>
<feature type="glycosylation site" description="N-linked (GlcNAc...) asparagine" evidence="3">
    <location>
        <position position="731"/>
    </location>
</feature>
<feature type="disulfide bond" evidence="1">
    <location>
        <begin position="35"/>
        <end position="45"/>
    </location>
</feature>
<feature type="disulfide bond" evidence="1">
    <location>
        <begin position="98"/>
        <end position="110"/>
    </location>
</feature>
<feature type="disulfide bond" evidence="1">
    <location>
        <begin position="178"/>
        <end position="184"/>
    </location>
</feature>
<feature type="disulfide bond" evidence="1">
    <location>
        <begin position="255"/>
        <end position="268"/>
    </location>
</feature>
<feature type="disulfide bond" evidence="1">
    <location>
        <begin position="258"/>
        <end position="265"/>
    </location>
</feature>
<feature type="disulfide bond" evidence="1">
    <location>
        <begin position="470"/>
        <end position="500"/>
    </location>
</feature>
<feature type="disulfide bond" evidence="1">
    <location>
        <begin position="764"/>
        <end position="790"/>
    </location>
</feature>
<feature type="disulfide bond" evidence="1">
    <location>
        <begin position="766"/>
        <end position="809"/>
    </location>
</feature>
<feature type="splice variant" id="VSP_006520" description="In isoform 2." evidence="12">
    <location>
        <begin position="1"/>
        <end position="57"/>
    </location>
</feature>
<feature type="splice variant" id="VSP_006523" description="In isoform 5." evidence="13">
    <original>MGFCRSALHPLSLLVQ</original>
    <variation>M</variation>
    <location>
        <begin position="1"/>
        <end position="16"/>
    </location>
</feature>
<feature type="splice variant" id="VSP_006521" description="In isoform 3." evidence="13">
    <original>M</original>
    <variation>MPMKWSGWRWSWGPATHTALPPPQ</variation>
    <location>
        <position position="1"/>
    </location>
</feature>
<feature type="splice variant" id="VSP_006522" description="In isoform 4." evidence="13">
    <original>M</original>
    <variation>MLYSSCKSRLLDSVEQDFHLEIAKK</variation>
    <location>
        <position position="1"/>
    </location>
</feature>
<feature type="sequence variant" id="VAR_024668" description="In dbSNP:rs5743842.">
    <original>R</original>
    <variation>C</variation>
    <location>
        <position position="5"/>
    </location>
</feature>
<feature type="sequence variant" id="VAR_052364" description="In dbSNP:rs5743843.">
    <original>H</original>
    <variation>Q</variation>
    <location>
        <position position="79"/>
    </location>
</feature>
<feature type="sequence variant" id="VAR_034555" description="In dbSNP:rs5743845.">
    <original>R</original>
    <variation>Q</variation>
    <location>
        <position position="863"/>
    </location>
</feature>
<feature type="sequence variant" id="VAR_052365" description="In dbSNP:rs5743846.">
    <original>A</original>
    <variation>T</variation>
    <location>
        <position position="882"/>
    </location>
</feature>
<feature type="sequence variant" id="VAR_036077" description="In a colorectal cancer sample; somatic mutation; dbSNP:rs755472700." evidence="7">
    <original>R</original>
    <variation>H</variation>
    <location>
        <position position="901"/>
    </location>
</feature>
<feature type="sequence variant" id="VAR_036078" description="In a colorectal cancer sample; somatic mutation; dbSNP:rs746622200." evidence="7">
    <original>T</original>
    <variation>M</variation>
    <location>
        <position position="933"/>
    </location>
</feature>
<feature type="sequence conflict" description="In Ref. 7; AAQ89443." evidence="14" ref="7">
    <original>N</original>
    <variation>S</variation>
    <location>
        <position position="200"/>
    </location>
</feature>
<feature type="sequence conflict" description="In Ref. 7; AAQ89443." evidence="14" ref="7">
    <original>F</original>
    <variation>L</variation>
    <location>
        <position position="330"/>
    </location>
</feature>
<feature type="sequence conflict" description="In Ref. 2; AAF78037." evidence="14" ref="2">
    <original>H</original>
    <variation>R</variation>
    <location>
        <position position="530"/>
    </location>
</feature>
<feature type="sequence conflict" description="In Ref. 2; AAF78037." evidence="14" ref="2">
    <original>Q</original>
    <variation>R</variation>
    <location>
        <position position="688"/>
    </location>
</feature>
<feature type="helix" evidence="15">
    <location>
        <begin position="816"/>
        <end position="836"/>
    </location>
</feature>
<feature type="turn" evidence="15">
    <location>
        <begin position="837"/>
        <end position="839"/>
    </location>
</feature>
<feature type="helix" evidence="15">
    <location>
        <begin position="844"/>
        <end position="853"/>
    </location>
</feature>
<feature type="strand" evidence="15">
    <location>
        <begin position="854"/>
        <end position="856"/>
    </location>
</feature>
<accession>Q9NR96</accession>
<accession>B3Y661</accession>
<accession>D1CS56</accession>
<accession>Q6UVZ2</accession>
<accession>Q9HD68</accession>
<accession>Q9HD69</accession>
<accession>Q9HD70</accession>
<accession>Q9NYC2</accession>
<accession>Q9NYC3</accession>
<name>TLR9_HUMAN</name>
<proteinExistence type="evidence at protein level"/>
<dbReference type="EMBL" id="AF259262">
    <property type="protein sequence ID" value="AAF72189.1"/>
    <property type="molecule type" value="mRNA"/>
</dbReference>
<dbReference type="EMBL" id="AF259263">
    <property type="protein sequence ID" value="AAF72190.1"/>
    <property type="molecule type" value="mRNA"/>
</dbReference>
<dbReference type="EMBL" id="AF245704">
    <property type="protein sequence ID" value="AAF78037.1"/>
    <property type="molecule type" value="mRNA"/>
</dbReference>
<dbReference type="EMBL" id="AF246972">
    <property type="protein sequence ID" value="AAG01734.1"/>
    <property type="molecule type" value="mRNA"/>
</dbReference>
<dbReference type="EMBL" id="AF246973">
    <property type="protein sequence ID" value="AAG01735.1"/>
    <property type="molecule type" value="mRNA"/>
</dbReference>
<dbReference type="EMBL" id="AF246974">
    <property type="protein sequence ID" value="AAG01736.1"/>
    <property type="molecule type" value="mRNA"/>
</dbReference>
<dbReference type="EMBL" id="AB045180">
    <property type="protein sequence ID" value="BAB19259.1"/>
    <property type="molecule type" value="mRNA"/>
</dbReference>
<dbReference type="EMBL" id="EU170540">
    <property type="protein sequence ID" value="ABW37075.1"/>
    <property type="molecule type" value="Genomic_DNA"/>
</dbReference>
<dbReference type="EMBL" id="EU170541">
    <property type="protein sequence ID" value="ABW37076.1"/>
    <property type="molecule type" value="Genomic_DNA"/>
</dbReference>
<dbReference type="EMBL" id="EU170542">
    <property type="protein sequence ID" value="ABW37077.1"/>
    <property type="molecule type" value="Genomic_DNA"/>
</dbReference>
<dbReference type="EMBL" id="EU170543">
    <property type="protein sequence ID" value="ABW37078.1"/>
    <property type="molecule type" value="Genomic_DNA"/>
</dbReference>
<dbReference type="EMBL" id="AB445673">
    <property type="protein sequence ID" value="BAG55070.1"/>
    <property type="molecule type" value="mRNA"/>
</dbReference>
<dbReference type="EMBL" id="DQ019992">
    <property type="protein sequence ID" value="AAZ95513.1"/>
    <property type="molecule type" value="Genomic_DNA"/>
</dbReference>
<dbReference type="EMBL" id="DQ019993">
    <property type="protein sequence ID" value="AAZ95514.1"/>
    <property type="molecule type" value="Genomic_DNA"/>
</dbReference>
<dbReference type="EMBL" id="DQ019994">
    <property type="protein sequence ID" value="AAZ95515.1"/>
    <property type="molecule type" value="Genomic_DNA"/>
</dbReference>
<dbReference type="EMBL" id="DQ019995">
    <property type="protein sequence ID" value="AAZ95516.1"/>
    <property type="molecule type" value="Genomic_DNA"/>
</dbReference>
<dbReference type="EMBL" id="DQ019996">
    <property type="protein sequence ID" value="AAZ95517.1"/>
    <property type="molecule type" value="Genomic_DNA"/>
</dbReference>
<dbReference type="EMBL" id="DQ019999">
    <property type="protein sequence ID" value="AAZ95520.1"/>
    <property type="molecule type" value="Genomic_DNA"/>
</dbReference>
<dbReference type="EMBL" id="AY359085">
    <property type="protein sequence ID" value="AAQ89443.1"/>
    <property type="molecule type" value="mRNA"/>
</dbReference>
<dbReference type="EMBL" id="CH471055">
    <property type="protein sequence ID" value="EAW65191.1"/>
    <property type="molecule type" value="Genomic_DNA"/>
</dbReference>
<dbReference type="EMBL" id="BC032713">
    <property type="protein sequence ID" value="AAH32713.1"/>
    <property type="molecule type" value="mRNA"/>
</dbReference>
<dbReference type="CCDS" id="CCDS2848.1">
    <molecule id="Q9NR96-1"/>
</dbReference>
<dbReference type="RefSeq" id="NP_059138.1">
    <molecule id="Q9NR96-1"/>
    <property type="nucleotide sequence ID" value="NM_017442.4"/>
</dbReference>
<dbReference type="PDB" id="8AR3">
    <property type="method" value="NMR"/>
    <property type="chains" value="A=812-860"/>
</dbReference>
<dbReference type="PDBsum" id="8AR3"/>
<dbReference type="SMR" id="Q9NR96"/>
<dbReference type="BioGRID" id="119902">
    <property type="interactions" value="151"/>
</dbReference>
<dbReference type="DIP" id="DIP-52371N"/>
<dbReference type="FunCoup" id="Q9NR96">
    <property type="interactions" value="196"/>
</dbReference>
<dbReference type="IntAct" id="Q9NR96">
    <property type="interactions" value="32"/>
</dbReference>
<dbReference type="STRING" id="9606.ENSP00000353874"/>
<dbReference type="BindingDB" id="Q9NR96"/>
<dbReference type="ChEMBL" id="CHEMBL5804"/>
<dbReference type="DrugBank" id="DB00608">
    <property type="generic name" value="Chloroquine"/>
</dbReference>
<dbReference type="DrugBank" id="DB05530">
    <property type="generic name" value="CPG 10101"/>
</dbReference>
<dbReference type="DrugBank" id="DB05475">
    <property type="generic name" value="Golotimod"/>
</dbReference>
<dbReference type="DrugBank" id="DB01611">
    <property type="generic name" value="Hydroxychloroquine"/>
</dbReference>
<dbReference type="DrugBank" id="DB05463">
    <property type="generic name" value="ISS-1018"/>
</dbReference>
<dbReference type="DrugBank" id="DB16485">
    <property type="generic name" value="ODN M362"/>
</dbReference>
<dbReference type="DrugBank" id="DB16341">
    <property type="generic name" value="Tilsotolimod"/>
</dbReference>
<dbReference type="DrugCentral" id="Q9NR96"/>
<dbReference type="GuidetoPHARMACOLOGY" id="1759"/>
<dbReference type="GlyCosmos" id="Q9NR96">
    <property type="glycosylation" value="13 sites, No reported glycans"/>
</dbReference>
<dbReference type="GlyGen" id="Q9NR96">
    <property type="glycosylation" value="15 sites, 4 N-linked glycans (5 sites), 1 O-linked glycan (1 site)"/>
</dbReference>
<dbReference type="iPTMnet" id="Q9NR96"/>
<dbReference type="PhosphoSitePlus" id="Q9NR96"/>
<dbReference type="SwissPalm" id="Q9NR96"/>
<dbReference type="BioMuta" id="TLR9"/>
<dbReference type="DMDM" id="20140872"/>
<dbReference type="jPOST" id="Q9NR96"/>
<dbReference type="MassIVE" id="Q9NR96"/>
<dbReference type="PaxDb" id="9606-ENSP00000353874"/>
<dbReference type="PeptideAtlas" id="Q9NR96"/>
<dbReference type="ProteomicsDB" id="82308">
    <molecule id="Q9NR96-1"/>
</dbReference>
<dbReference type="ProteomicsDB" id="82309">
    <molecule id="Q9NR96-2"/>
</dbReference>
<dbReference type="ProteomicsDB" id="82310">
    <molecule id="Q9NR96-3"/>
</dbReference>
<dbReference type="ProteomicsDB" id="82311">
    <molecule id="Q9NR96-4"/>
</dbReference>
<dbReference type="ProteomicsDB" id="82312">
    <molecule id="Q9NR96-5"/>
</dbReference>
<dbReference type="ABCD" id="Q9NR96">
    <property type="antibodies" value="1 sequenced antibody"/>
</dbReference>
<dbReference type="Antibodypedia" id="34940">
    <property type="antibodies" value="1099 antibodies from 45 providers"/>
</dbReference>
<dbReference type="DNASU" id="54106"/>
<dbReference type="Ensembl" id="ENST00000360658.3">
    <molecule id="Q9NR96-1"/>
    <property type="protein sequence ID" value="ENSP00000353874.2"/>
    <property type="gene ID" value="ENSG00000239732.4"/>
</dbReference>
<dbReference type="GeneID" id="54106"/>
<dbReference type="KEGG" id="hsa:54106"/>
<dbReference type="MANE-Select" id="ENST00000360658.3">
    <property type="protein sequence ID" value="ENSP00000353874.2"/>
    <property type="RefSeq nucleotide sequence ID" value="NM_017442.4"/>
    <property type="RefSeq protein sequence ID" value="NP_059138.1"/>
</dbReference>
<dbReference type="UCSC" id="uc003dda.2">
    <molecule id="Q9NR96-1"/>
    <property type="organism name" value="human"/>
</dbReference>
<dbReference type="AGR" id="HGNC:15633"/>
<dbReference type="CTD" id="54106"/>
<dbReference type="DisGeNET" id="54106"/>
<dbReference type="GeneCards" id="TLR9"/>
<dbReference type="HGNC" id="HGNC:15633">
    <property type="gene designation" value="TLR9"/>
</dbReference>
<dbReference type="HPA" id="ENSG00000239732">
    <property type="expression patterns" value="Tissue enhanced (lymphoid)"/>
</dbReference>
<dbReference type="MIM" id="605474">
    <property type="type" value="gene"/>
</dbReference>
<dbReference type="neXtProt" id="NX_Q9NR96"/>
<dbReference type="OpenTargets" id="ENSG00000239732"/>
<dbReference type="PharmGKB" id="PA38010"/>
<dbReference type="VEuPathDB" id="HostDB:ENSG00000239732"/>
<dbReference type="eggNOG" id="KOG1747">
    <property type="taxonomic scope" value="Eukaryota"/>
</dbReference>
<dbReference type="eggNOG" id="KOG4641">
    <property type="taxonomic scope" value="Eukaryota"/>
</dbReference>
<dbReference type="GeneTree" id="ENSGT00940000162493"/>
<dbReference type="HOGENOM" id="CLU_006000_2_0_1"/>
<dbReference type="InParanoid" id="Q9NR96"/>
<dbReference type="OrthoDB" id="10006997at2759"/>
<dbReference type="PAN-GO" id="Q9NR96">
    <property type="GO annotations" value="7 GO annotations based on evolutionary models"/>
</dbReference>
<dbReference type="PhylomeDB" id="Q9NR96"/>
<dbReference type="TreeFam" id="TF325595"/>
<dbReference type="PathwayCommons" id="Q9NR96"/>
<dbReference type="Reactome" id="R-HSA-109704">
    <property type="pathway name" value="PI3K Cascade"/>
</dbReference>
<dbReference type="Reactome" id="R-HSA-1679131">
    <property type="pathway name" value="Trafficking and processing of endosomal TLR"/>
</dbReference>
<dbReference type="Reactome" id="R-HSA-168138">
    <property type="pathway name" value="Toll Like Receptor 9 (TLR9) Cascade"/>
</dbReference>
<dbReference type="Reactome" id="R-HSA-9679191">
    <property type="pathway name" value="Potential therapeutics for SARS"/>
</dbReference>
<dbReference type="Reactome" id="R-HSA-975110">
    <property type="pathway name" value="TRAF6 mediated IRF7 activation in TLR7/8 or 9 signaling"/>
</dbReference>
<dbReference type="Reactome" id="R-HSA-975138">
    <property type="pathway name" value="TRAF6 mediated induction of NFkB and MAP kinases upon TLR7/8 or 9 activation"/>
</dbReference>
<dbReference type="Reactome" id="R-HSA-975155">
    <property type="pathway name" value="MyD88 dependent cascade initiated on endosome"/>
</dbReference>
<dbReference type="SignaLink" id="Q9NR96"/>
<dbReference type="SIGNOR" id="Q9NR96"/>
<dbReference type="BioGRID-ORCS" id="54106">
    <property type="hits" value="13 hits in 1151 CRISPR screens"/>
</dbReference>
<dbReference type="GeneWiki" id="TLR9"/>
<dbReference type="GenomeRNAi" id="54106"/>
<dbReference type="Pharos" id="Q9NR96">
    <property type="development level" value="Tclin"/>
</dbReference>
<dbReference type="PRO" id="PR:Q9NR96"/>
<dbReference type="Proteomes" id="UP000005640">
    <property type="component" value="Chromosome 3"/>
</dbReference>
<dbReference type="RNAct" id="Q9NR96">
    <property type="molecule type" value="protein"/>
</dbReference>
<dbReference type="Bgee" id="ENSG00000239732">
    <property type="expression patterns" value="Expressed in blood and 85 other cell types or tissues"/>
</dbReference>
<dbReference type="GO" id="GO:0016324">
    <property type="term" value="C:apical plasma membrane"/>
    <property type="evidence" value="ECO:0000314"/>
    <property type="project" value="BHF-UCL"/>
</dbReference>
<dbReference type="GO" id="GO:0016323">
    <property type="term" value="C:basolateral plasma membrane"/>
    <property type="evidence" value="ECO:0000314"/>
    <property type="project" value="BHF-UCL"/>
</dbReference>
<dbReference type="GO" id="GO:0005737">
    <property type="term" value="C:cytoplasm"/>
    <property type="evidence" value="ECO:0000314"/>
    <property type="project" value="BHF-UCL"/>
</dbReference>
<dbReference type="GO" id="GO:0031901">
    <property type="term" value="C:early endosome membrane"/>
    <property type="evidence" value="ECO:0000314"/>
    <property type="project" value="UniProt"/>
</dbReference>
<dbReference type="GO" id="GO:0032009">
    <property type="term" value="C:early phagosome"/>
    <property type="evidence" value="ECO:0000250"/>
    <property type="project" value="UniProtKB"/>
</dbReference>
<dbReference type="GO" id="GO:0036019">
    <property type="term" value="C:endolysosome"/>
    <property type="evidence" value="ECO:0000250"/>
    <property type="project" value="UniProtKB"/>
</dbReference>
<dbReference type="GO" id="GO:0036020">
    <property type="term" value="C:endolysosome membrane"/>
    <property type="evidence" value="ECO:0000304"/>
    <property type="project" value="Reactome"/>
</dbReference>
<dbReference type="GO" id="GO:0005783">
    <property type="term" value="C:endoplasmic reticulum"/>
    <property type="evidence" value="ECO:0000314"/>
    <property type="project" value="UniProt"/>
</dbReference>
<dbReference type="GO" id="GO:0005789">
    <property type="term" value="C:endoplasmic reticulum membrane"/>
    <property type="evidence" value="ECO:0000304"/>
    <property type="project" value="Reactome"/>
</dbReference>
<dbReference type="GO" id="GO:0005768">
    <property type="term" value="C:endosome"/>
    <property type="evidence" value="ECO:0000250"/>
    <property type="project" value="UniProtKB"/>
</dbReference>
<dbReference type="GO" id="GO:0010008">
    <property type="term" value="C:endosome membrane"/>
    <property type="evidence" value="ECO:0000304"/>
    <property type="project" value="Reactome"/>
</dbReference>
<dbReference type="GO" id="GO:0005576">
    <property type="term" value="C:extracellular region"/>
    <property type="evidence" value="ECO:0000303"/>
    <property type="project" value="UniProtKB"/>
</dbReference>
<dbReference type="GO" id="GO:0000139">
    <property type="term" value="C:Golgi membrane"/>
    <property type="evidence" value="ECO:0000304"/>
    <property type="project" value="Reactome"/>
</dbReference>
<dbReference type="GO" id="GO:0005764">
    <property type="term" value="C:lysosome"/>
    <property type="evidence" value="ECO:0000250"/>
    <property type="project" value="UniProtKB"/>
</dbReference>
<dbReference type="GO" id="GO:0005886">
    <property type="term" value="C:plasma membrane"/>
    <property type="evidence" value="ECO:0000314"/>
    <property type="project" value="BHF-UCL"/>
</dbReference>
<dbReference type="GO" id="GO:0005149">
    <property type="term" value="F:interleukin-1 receptor binding"/>
    <property type="evidence" value="ECO:0000353"/>
    <property type="project" value="UniProtKB"/>
</dbReference>
<dbReference type="GO" id="GO:0038187">
    <property type="term" value="F:pattern recognition receptor activity"/>
    <property type="evidence" value="ECO:0000314"/>
    <property type="project" value="BHF-UCL"/>
</dbReference>
<dbReference type="GO" id="GO:0042803">
    <property type="term" value="F:protein homodimerization activity"/>
    <property type="evidence" value="ECO:0000250"/>
    <property type="project" value="UniProtKB"/>
</dbReference>
<dbReference type="GO" id="GO:0035197">
    <property type="term" value="F:siRNA binding"/>
    <property type="evidence" value="ECO:0000315"/>
    <property type="project" value="UniProtKB"/>
</dbReference>
<dbReference type="GO" id="GO:0045322">
    <property type="term" value="F:unmethylated CpG binding"/>
    <property type="evidence" value="ECO:0000250"/>
    <property type="project" value="UniProtKB"/>
</dbReference>
<dbReference type="GO" id="GO:0007249">
    <property type="term" value="P:canonical NF-kappaB signal transduction"/>
    <property type="evidence" value="ECO:0000318"/>
    <property type="project" value="GO_Central"/>
</dbReference>
<dbReference type="GO" id="GO:1902350">
    <property type="term" value="P:cellular response to chloroquine"/>
    <property type="evidence" value="ECO:0007669"/>
    <property type="project" value="Ensembl"/>
</dbReference>
<dbReference type="GO" id="GO:0071222">
    <property type="term" value="P:cellular response to lipopolysaccharide"/>
    <property type="evidence" value="ECO:0007669"/>
    <property type="project" value="Ensembl"/>
</dbReference>
<dbReference type="GO" id="GO:0071248">
    <property type="term" value="P:cellular response to metal ion"/>
    <property type="evidence" value="ECO:0007669"/>
    <property type="project" value="Ensembl"/>
</dbReference>
<dbReference type="GO" id="GO:0042742">
    <property type="term" value="P:defense response to bacterium"/>
    <property type="evidence" value="ECO:0000303"/>
    <property type="project" value="UniProtKB"/>
</dbReference>
<dbReference type="GO" id="GO:0050829">
    <property type="term" value="P:defense response to Gram-negative bacterium"/>
    <property type="evidence" value="ECO:0000315"/>
    <property type="project" value="UniProtKB"/>
</dbReference>
<dbReference type="GO" id="GO:0051607">
    <property type="term" value="P:defense response to virus"/>
    <property type="evidence" value="ECO:0000318"/>
    <property type="project" value="GO_Central"/>
</dbReference>
<dbReference type="GO" id="GO:0032490">
    <property type="term" value="P:detection of molecule of bacterial origin"/>
    <property type="evidence" value="ECO:0000314"/>
    <property type="project" value="BHF-UCL"/>
</dbReference>
<dbReference type="GO" id="GO:0045087">
    <property type="term" value="P:innate immune response"/>
    <property type="evidence" value="ECO:0000304"/>
    <property type="project" value="BHF-UCL"/>
</dbReference>
<dbReference type="GO" id="GO:0030277">
    <property type="term" value="P:maintenance of gastrointestinal epithelium"/>
    <property type="evidence" value="ECO:0000250"/>
    <property type="project" value="BHF-UCL"/>
</dbReference>
<dbReference type="GO" id="GO:0008584">
    <property type="term" value="P:male gonad development"/>
    <property type="evidence" value="ECO:0007669"/>
    <property type="project" value="Ensembl"/>
</dbReference>
<dbReference type="GO" id="GO:0001774">
    <property type="term" value="P:microglial cell activation"/>
    <property type="evidence" value="ECO:0007669"/>
    <property type="project" value="Ensembl"/>
</dbReference>
<dbReference type="GO" id="GO:0002755">
    <property type="term" value="P:MyD88-dependent toll-like receptor signaling pathway"/>
    <property type="evidence" value="ECO:0007669"/>
    <property type="project" value="Ensembl"/>
</dbReference>
<dbReference type="GO" id="GO:1901895">
    <property type="term" value="P:negative regulation of ATPase-coupled calcium transmembrane transporter activity"/>
    <property type="evidence" value="ECO:0000314"/>
    <property type="project" value="CACAO"/>
</dbReference>
<dbReference type="GO" id="GO:0070373">
    <property type="term" value="P:negative regulation of ERK1 and ERK2 cascade"/>
    <property type="evidence" value="ECO:0007669"/>
    <property type="project" value="Ensembl"/>
</dbReference>
<dbReference type="GO" id="GO:0010508">
    <property type="term" value="P:positive regulation of autophagy"/>
    <property type="evidence" value="ECO:0007669"/>
    <property type="project" value="Ensembl"/>
</dbReference>
<dbReference type="GO" id="GO:0050871">
    <property type="term" value="P:positive regulation of B cell activation"/>
    <property type="evidence" value="ECO:0000314"/>
    <property type="project" value="UniProtKB"/>
</dbReference>
<dbReference type="GO" id="GO:0030890">
    <property type="term" value="P:positive regulation of B cell proliferation"/>
    <property type="evidence" value="ECO:0000314"/>
    <property type="project" value="UniProtKB"/>
</dbReference>
<dbReference type="GO" id="GO:0043123">
    <property type="term" value="P:positive regulation of canonical NF-kappaB signal transduction"/>
    <property type="evidence" value="ECO:0000314"/>
    <property type="project" value="BHF-UCL"/>
</dbReference>
<dbReference type="GO" id="GO:0032722">
    <property type="term" value="P:positive regulation of chemokine production"/>
    <property type="evidence" value="ECO:0000314"/>
    <property type="project" value="BHF-UCL"/>
</dbReference>
<dbReference type="GO" id="GO:0010628">
    <property type="term" value="P:positive regulation of gene expression"/>
    <property type="evidence" value="ECO:0000314"/>
    <property type="project" value="CACAO"/>
</dbReference>
<dbReference type="GO" id="GO:0032725">
    <property type="term" value="P:positive regulation of granulocyte macrophage colony-stimulating factor production"/>
    <property type="evidence" value="ECO:0000314"/>
    <property type="project" value="CACAO"/>
</dbReference>
<dbReference type="GO" id="GO:0002639">
    <property type="term" value="P:positive regulation of immunoglobulin production"/>
    <property type="evidence" value="ECO:0000314"/>
    <property type="project" value="UniProtKB"/>
</dbReference>
<dbReference type="GO" id="GO:0050729">
    <property type="term" value="P:positive regulation of inflammatory response"/>
    <property type="evidence" value="ECO:0000314"/>
    <property type="project" value="BHF-UCL"/>
</dbReference>
<dbReference type="GO" id="GO:0032727">
    <property type="term" value="P:positive regulation of interferon-alpha production"/>
    <property type="evidence" value="ECO:0000314"/>
    <property type="project" value="UniProtKB"/>
</dbReference>
<dbReference type="GO" id="GO:0032728">
    <property type="term" value="P:positive regulation of interferon-beta production"/>
    <property type="evidence" value="ECO:0000314"/>
    <property type="project" value="UniProtKB"/>
</dbReference>
<dbReference type="GO" id="GO:0032733">
    <property type="term" value="P:positive regulation of interleukin-10 production"/>
    <property type="evidence" value="ECO:0000250"/>
    <property type="project" value="BHF-UCL"/>
</dbReference>
<dbReference type="GO" id="GO:0032735">
    <property type="term" value="P:positive regulation of interleukin-12 production"/>
    <property type="evidence" value="ECO:0000250"/>
    <property type="project" value="BHF-UCL"/>
</dbReference>
<dbReference type="GO" id="GO:0032741">
    <property type="term" value="P:positive regulation of interleukin-18 production"/>
    <property type="evidence" value="ECO:0000250"/>
    <property type="project" value="BHF-UCL"/>
</dbReference>
<dbReference type="GO" id="GO:0032755">
    <property type="term" value="P:positive regulation of interleukin-6 production"/>
    <property type="evidence" value="ECO:0000314"/>
    <property type="project" value="BHF-UCL"/>
</dbReference>
<dbReference type="GO" id="GO:0032757">
    <property type="term" value="P:positive regulation of interleukin-8 production"/>
    <property type="evidence" value="ECO:0000314"/>
    <property type="project" value="BHF-UCL"/>
</dbReference>
<dbReference type="GO" id="GO:1905300">
    <property type="term" value="P:positive regulation of intestinal epithelial cell development"/>
    <property type="evidence" value="ECO:0000250"/>
    <property type="project" value="BHF-UCL"/>
</dbReference>
<dbReference type="GO" id="GO:0046330">
    <property type="term" value="P:positive regulation of JNK cascade"/>
    <property type="evidence" value="ECO:0000314"/>
    <property type="project" value="BHF-UCL"/>
</dbReference>
<dbReference type="GO" id="GO:0043410">
    <property type="term" value="P:positive regulation of MAPK cascade"/>
    <property type="evidence" value="ECO:0000314"/>
    <property type="project" value="UniProtKB"/>
</dbReference>
<dbReference type="GO" id="GO:0034165">
    <property type="term" value="P:positive regulation of toll-like receptor 9 signaling pathway"/>
    <property type="evidence" value="ECO:0007669"/>
    <property type="project" value="Ensembl"/>
</dbReference>
<dbReference type="GO" id="GO:0045944">
    <property type="term" value="P:positive regulation of transcription by RNA polymerase II"/>
    <property type="evidence" value="ECO:0007669"/>
    <property type="project" value="Ensembl"/>
</dbReference>
<dbReference type="GO" id="GO:0032760">
    <property type="term" value="P:positive regulation of tumor necrosis factor production"/>
    <property type="evidence" value="ECO:0000250"/>
    <property type="project" value="BHF-UCL"/>
</dbReference>
<dbReference type="GO" id="GO:0032729">
    <property type="term" value="P:positive regulation of type II interferon production"/>
    <property type="evidence" value="ECO:0000314"/>
    <property type="project" value="UniProtKB"/>
</dbReference>
<dbReference type="GO" id="GO:0045577">
    <property type="term" value="P:regulation of B cell differentiation"/>
    <property type="evidence" value="ECO:0000314"/>
    <property type="project" value="UniProtKB"/>
</dbReference>
<dbReference type="GO" id="GO:0002730">
    <property type="term" value="P:regulation of dendritic cell cytokine production"/>
    <property type="evidence" value="ECO:0007669"/>
    <property type="project" value="Ensembl"/>
</dbReference>
<dbReference type="GO" id="GO:0034162">
    <property type="term" value="P:toll-like receptor 9 signaling pathway"/>
    <property type="evidence" value="ECO:0000314"/>
    <property type="project" value="UniProt"/>
</dbReference>
<dbReference type="GO" id="GO:0002224">
    <property type="term" value="P:toll-like receptor signaling pathway"/>
    <property type="evidence" value="ECO:0000314"/>
    <property type="project" value="BHF-UCL"/>
</dbReference>
<dbReference type="FunFam" id="3.40.50.10140:FF:000003">
    <property type="entry name" value="Toll-like receptor 7"/>
    <property type="match status" value="1"/>
</dbReference>
<dbReference type="FunFam" id="3.80.10.10:FF:000037">
    <property type="entry name" value="Toll-like receptor 7"/>
    <property type="match status" value="1"/>
</dbReference>
<dbReference type="Gene3D" id="3.80.10.10">
    <property type="entry name" value="Ribonuclease Inhibitor"/>
    <property type="match status" value="1"/>
</dbReference>
<dbReference type="Gene3D" id="3.40.50.10140">
    <property type="entry name" value="Toll/interleukin-1 receptor homology (TIR) domain"/>
    <property type="match status" value="1"/>
</dbReference>
<dbReference type="InterPro" id="IPR001611">
    <property type="entry name" value="Leu-rich_rpt"/>
</dbReference>
<dbReference type="InterPro" id="IPR003591">
    <property type="entry name" value="Leu-rich_rpt_typical-subtyp"/>
</dbReference>
<dbReference type="InterPro" id="IPR041283">
    <property type="entry name" value="LRR_12"/>
</dbReference>
<dbReference type="InterPro" id="IPR032675">
    <property type="entry name" value="LRR_dom_sf"/>
</dbReference>
<dbReference type="InterPro" id="IPR000157">
    <property type="entry name" value="TIR_dom"/>
</dbReference>
<dbReference type="InterPro" id="IPR035897">
    <property type="entry name" value="Toll_tir_struct_dom_sf"/>
</dbReference>
<dbReference type="PANTHER" id="PTHR47410">
    <property type="entry name" value="TOLL-LIKE RECEPTOR 7-RELATED"/>
    <property type="match status" value="1"/>
</dbReference>
<dbReference type="PANTHER" id="PTHR47410:SF3">
    <property type="entry name" value="TOLL-LIKE RECEPTOR 9"/>
    <property type="match status" value="1"/>
</dbReference>
<dbReference type="Pfam" id="PF18837">
    <property type="entry name" value="LRR_12"/>
    <property type="match status" value="1"/>
</dbReference>
<dbReference type="Pfam" id="PF13516">
    <property type="entry name" value="LRR_6"/>
    <property type="match status" value="2"/>
</dbReference>
<dbReference type="Pfam" id="PF13855">
    <property type="entry name" value="LRR_8"/>
    <property type="match status" value="7"/>
</dbReference>
<dbReference type="Pfam" id="PF01582">
    <property type="entry name" value="TIR"/>
    <property type="match status" value="1"/>
</dbReference>
<dbReference type="PRINTS" id="PR00019">
    <property type="entry name" value="LEURICHRPT"/>
</dbReference>
<dbReference type="SMART" id="SM00364">
    <property type="entry name" value="LRR_BAC"/>
    <property type="match status" value="4"/>
</dbReference>
<dbReference type="SMART" id="SM00365">
    <property type="entry name" value="LRR_SD22"/>
    <property type="match status" value="7"/>
</dbReference>
<dbReference type="SMART" id="SM00369">
    <property type="entry name" value="LRR_TYP"/>
    <property type="match status" value="18"/>
</dbReference>
<dbReference type="SMART" id="SM00255">
    <property type="entry name" value="TIR"/>
    <property type="match status" value="1"/>
</dbReference>
<dbReference type="SUPFAM" id="SSF52058">
    <property type="entry name" value="L domain-like"/>
    <property type="match status" value="2"/>
</dbReference>
<dbReference type="SUPFAM" id="SSF52200">
    <property type="entry name" value="Toll/Interleukin receptor TIR domain"/>
    <property type="match status" value="1"/>
</dbReference>
<dbReference type="PROSITE" id="PS51450">
    <property type="entry name" value="LRR"/>
    <property type="match status" value="17"/>
</dbReference>
<dbReference type="PROSITE" id="PS50104">
    <property type="entry name" value="TIR"/>
    <property type="match status" value="1"/>
</dbReference>
<gene>
    <name type="primary">TLR9</name>
    <name type="ORF">UNQ5798/PRO19605</name>
</gene>
<organism>
    <name type="scientific">Homo sapiens</name>
    <name type="common">Human</name>
    <dbReference type="NCBI Taxonomy" id="9606"/>
    <lineage>
        <taxon>Eukaryota</taxon>
        <taxon>Metazoa</taxon>
        <taxon>Chordata</taxon>
        <taxon>Craniata</taxon>
        <taxon>Vertebrata</taxon>
        <taxon>Euteleostomi</taxon>
        <taxon>Mammalia</taxon>
        <taxon>Eutheria</taxon>
        <taxon>Euarchontoglires</taxon>
        <taxon>Primates</taxon>
        <taxon>Haplorrhini</taxon>
        <taxon>Catarrhini</taxon>
        <taxon>Hominidae</taxon>
        <taxon>Homo</taxon>
    </lineage>
</organism>
<reference key="1">
    <citation type="journal article" date="2000" name="Eur. Cytokine Netw.">
        <title>Three novel mammalian Toll-like receptors: gene structure, expression, and evolution.</title>
        <authorList>
            <person name="Du X."/>
            <person name="Poltorak A."/>
            <person name="Wei Y."/>
            <person name="Beutler B."/>
        </authorList>
    </citation>
    <scope>NUCLEOTIDE SEQUENCE [MRNA] (ISOFORMS 1 AND 2)</scope>
    <source>
        <tissue>Monocytic leukemia</tissue>
    </source>
</reference>
<reference key="2">
    <citation type="journal article" date="2000" name="Eur. Cytokine Netw.">
        <title>Cloning and characterization of a sub-family of human Toll-like receptors: hTLR7, hTLR8 and hTLR9.</title>
        <authorList>
            <person name="Chuang T.-H."/>
            <person name="Ulevitch R.J."/>
        </authorList>
    </citation>
    <scope>NUCLEOTIDE SEQUENCE [MRNA] (ISOFORMS 1; 3; 4 AND 5)</scope>
    <source>
        <tissue>Placenta</tissue>
    </source>
</reference>
<reference key="3">
    <citation type="journal article" date="2000" name="Nature">
        <title>A Toll-like receptor recognizes bacterial DNA.</title>
        <authorList>
            <person name="Hemmi H."/>
            <person name="Takeuchi O."/>
            <person name="Kawai T."/>
            <person name="Kaisho T."/>
            <person name="Sato S."/>
            <person name="Sanjo H."/>
            <person name="Matsumoto M."/>
            <person name="Hoshino K."/>
            <person name="Wagner H."/>
            <person name="Takeda K."/>
            <person name="Akira S."/>
        </authorList>
    </citation>
    <scope>NUCLEOTIDE SEQUENCE [MRNA] (ISOFORM 1)</scope>
</reference>
<reference key="4">
    <citation type="submission" date="2007-09" db="EMBL/GenBank/DDBJ databases">
        <authorList>
            <person name="Liu Z."/>
            <person name="Wang J."/>
            <person name="Xiao W."/>
        </authorList>
    </citation>
    <scope>NUCLEOTIDE SEQUENCE [GENOMIC DNA]</scope>
</reference>
<reference key="5">
    <citation type="journal article" date="2008" name="Immunogenetics">
        <title>Natural selection in the TLR-related genes in the course of primate evolution.</title>
        <authorList>
            <person name="Nakajima T."/>
            <person name="Ohtani H."/>
            <person name="Satta Y."/>
            <person name="Uno Y."/>
            <person name="Akari H."/>
            <person name="Ishida T."/>
            <person name="Kimura A."/>
        </authorList>
    </citation>
    <scope>NUCLEOTIDE SEQUENCE [MRNA]</scope>
</reference>
<reference key="6">
    <citation type="journal article" date="2009" name="PLoS ONE">
        <title>The heterogeneous allelic repertoire of human Toll-Like receptor (TLR) genes.</title>
        <authorList>
            <person name="Georgel P."/>
            <person name="Macquin C."/>
            <person name="Bahram S."/>
        </authorList>
    </citation>
    <scope>NUCLEOTIDE SEQUENCE [MRNA]</scope>
</reference>
<reference key="7">
    <citation type="journal article" date="2003" name="Genome Res.">
        <title>The secreted protein discovery initiative (SPDI), a large-scale effort to identify novel human secreted and transmembrane proteins: a bioinformatics assessment.</title>
        <authorList>
            <person name="Clark H.F."/>
            <person name="Gurney A.L."/>
            <person name="Abaya E."/>
            <person name="Baker K."/>
            <person name="Baldwin D.T."/>
            <person name="Brush J."/>
            <person name="Chen J."/>
            <person name="Chow B."/>
            <person name="Chui C."/>
            <person name="Crowley C."/>
            <person name="Currell B."/>
            <person name="Deuel B."/>
            <person name="Dowd P."/>
            <person name="Eaton D."/>
            <person name="Foster J.S."/>
            <person name="Grimaldi C."/>
            <person name="Gu Q."/>
            <person name="Hass P.E."/>
            <person name="Heldens S."/>
            <person name="Huang A."/>
            <person name="Kim H.S."/>
            <person name="Klimowski L."/>
            <person name="Jin Y."/>
            <person name="Johnson S."/>
            <person name="Lee J."/>
            <person name="Lewis L."/>
            <person name="Liao D."/>
            <person name="Mark M.R."/>
            <person name="Robbie E."/>
            <person name="Sanchez C."/>
            <person name="Schoenfeld J."/>
            <person name="Seshagiri S."/>
            <person name="Simmons L."/>
            <person name="Singh J."/>
            <person name="Smith V."/>
            <person name="Stinson J."/>
            <person name="Vagts A."/>
            <person name="Vandlen R.L."/>
            <person name="Watanabe C."/>
            <person name="Wieand D."/>
            <person name="Woods K."/>
            <person name="Xie M.-H."/>
            <person name="Yansura D.G."/>
            <person name="Yi S."/>
            <person name="Yu G."/>
            <person name="Yuan J."/>
            <person name="Zhang M."/>
            <person name="Zhang Z."/>
            <person name="Goddard A.D."/>
            <person name="Wood W.I."/>
            <person name="Godowski P.J."/>
            <person name="Gray A.M."/>
        </authorList>
    </citation>
    <scope>NUCLEOTIDE SEQUENCE [LARGE SCALE MRNA] (ISOFORM 1)</scope>
</reference>
<reference key="8">
    <citation type="submission" date="2005-07" db="EMBL/GenBank/DDBJ databases">
        <authorList>
            <person name="Mural R.J."/>
            <person name="Istrail S."/>
            <person name="Sutton G.G."/>
            <person name="Florea L."/>
            <person name="Halpern A.L."/>
            <person name="Mobarry C.M."/>
            <person name="Lippert R."/>
            <person name="Walenz B."/>
            <person name="Shatkay H."/>
            <person name="Dew I."/>
            <person name="Miller J.R."/>
            <person name="Flanigan M.J."/>
            <person name="Edwards N.J."/>
            <person name="Bolanos R."/>
            <person name="Fasulo D."/>
            <person name="Halldorsson B.V."/>
            <person name="Hannenhalli S."/>
            <person name="Turner R."/>
            <person name="Yooseph S."/>
            <person name="Lu F."/>
            <person name="Nusskern D.R."/>
            <person name="Shue B.C."/>
            <person name="Zheng X.H."/>
            <person name="Zhong F."/>
            <person name="Delcher A.L."/>
            <person name="Huson D.H."/>
            <person name="Kravitz S.A."/>
            <person name="Mouchard L."/>
            <person name="Reinert K."/>
            <person name="Remington K.A."/>
            <person name="Clark A.G."/>
            <person name="Waterman M.S."/>
            <person name="Eichler E.E."/>
            <person name="Adams M.D."/>
            <person name="Hunkapiller M.W."/>
            <person name="Myers E.W."/>
            <person name="Venter J.C."/>
        </authorList>
    </citation>
    <scope>NUCLEOTIDE SEQUENCE [LARGE SCALE GENOMIC DNA]</scope>
</reference>
<reference key="9">
    <citation type="journal article" date="2004" name="Genome Res.">
        <title>The status, quality, and expansion of the NIH full-length cDNA project: the Mammalian Gene Collection (MGC).</title>
        <authorList>
            <consortium name="The MGC Project Team"/>
        </authorList>
    </citation>
    <scope>NUCLEOTIDE SEQUENCE [LARGE SCALE MRNA] (ISOFORM 1)</scope>
    <source>
        <tissue>Lymph</tissue>
    </source>
</reference>
<reference key="10">
    <citation type="journal article" date="2001" name="J. Immunol.">
        <title>Role of Toll-like receptor 9 in CpG DNA-induced activation of human cells.</title>
        <authorList>
            <person name="Takeshita F."/>
            <person name="Leifer C.A."/>
            <person name="Gursel I."/>
            <person name="Ishii K.J."/>
            <person name="Takeshita S."/>
            <person name="Gursel M."/>
            <person name="Klinman D.M."/>
        </authorList>
    </citation>
    <scope>FUNCTION</scope>
</reference>
<reference key="11">
    <citation type="journal article" date="2004" name="Nat. Immunol.">
        <title>TLR9 signals after translocating from the ER to CpG DNA in the lysosome.</title>
        <authorList>
            <person name="Latz E."/>
            <person name="Schoenemeyer A."/>
            <person name="Visintin A."/>
            <person name="Fitzgerald K.A."/>
            <person name="Monks B.G."/>
            <person name="Knetter C.F."/>
            <person name="Lien E."/>
            <person name="Nilsen N.J."/>
            <person name="Espevik T."/>
            <person name="Golenbock D.T."/>
        </authorList>
    </citation>
    <scope>FUNCTION</scope>
    <scope>SUBCELLULAR LOCATION</scope>
</reference>
<reference key="12">
    <citation type="journal article" date="2007" name="J. Biol. Chem.">
        <title>Signaling by Toll-like receptors 8 and 9 requires Bruton's tyrosine kinase.</title>
        <authorList>
            <person name="Doyle S.L."/>
            <person name="Jefferies C.A."/>
            <person name="Feighery C."/>
            <person name="O'Neill L.A."/>
        </authorList>
    </citation>
    <scope>FUNCTION</scope>
    <scope>INTERACTION WITH BTK</scope>
</reference>
<reference key="13">
    <citation type="journal article" date="2010" name="Nat. Commun.">
        <title>Folding of Toll-like receptors by the HSP90 paralogue gp96 requires a substrate-specific cochaperone.</title>
        <authorList>
            <person name="Liu B."/>
            <person name="Yang Y."/>
            <person name="Qiu Z."/>
            <person name="Staron M."/>
            <person name="Hong F."/>
            <person name="Li Y."/>
            <person name="Wu S."/>
            <person name="Li Y."/>
            <person name="Hao B."/>
            <person name="Bona R."/>
            <person name="Han D."/>
            <person name="Li Z."/>
        </authorList>
    </citation>
    <scope>INTERACTION WITH CNPY3 AND HSP90B1</scope>
</reference>
<reference key="14">
    <citation type="journal article" date="2012" name="Nat. Commun.">
        <authorList>
            <person name="Liu B."/>
            <person name="Yang Y."/>
            <person name="Qiu Z."/>
            <person name="Staron M."/>
            <person name="Hong F."/>
            <person name="Li Y."/>
            <person name="Wu S."/>
            <person name="Li Y."/>
            <person name="Hao B."/>
            <person name="Bona R."/>
            <person name="Han D."/>
            <person name="Li Z."/>
        </authorList>
    </citation>
    <scope>ERRATUM OF PUBMED:20865800</scope>
</reference>
<reference key="15">
    <citation type="journal article" date="2013" name="Eur. J. Immunol.">
        <title>FCRL3 promotes TLR9-induced B-cell activation and suppresses plasma cell differentiation.</title>
        <authorList>
            <person name="Li F.J."/>
            <person name="Schreeder D.M."/>
            <person name="Li R."/>
            <person name="Wu J."/>
            <person name="Davis R.S."/>
        </authorList>
    </citation>
    <scope>FUNCTION</scope>
</reference>
<reference key="16">
    <citation type="journal article" date="2006" name="Science">
        <title>The consensus coding sequences of human breast and colorectal cancers.</title>
        <authorList>
            <person name="Sjoeblom T."/>
            <person name="Jones S."/>
            <person name="Wood L.D."/>
            <person name="Parsons D.W."/>
            <person name="Lin J."/>
            <person name="Barber T.D."/>
            <person name="Mandelker D."/>
            <person name="Leary R.J."/>
            <person name="Ptak J."/>
            <person name="Silliman N."/>
            <person name="Szabo S."/>
            <person name="Buckhaults P."/>
            <person name="Farrell C."/>
            <person name="Meeh P."/>
            <person name="Markowitz S.D."/>
            <person name="Willis J."/>
            <person name="Dawson D."/>
            <person name="Willson J.K.V."/>
            <person name="Gazdar A.F."/>
            <person name="Hartigan J."/>
            <person name="Wu L."/>
            <person name="Liu C."/>
            <person name="Parmigiani G."/>
            <person name="Park B.H."/>
            <person name="Bachman K.E."/>
            <person name="Papadopoulos N."/>
            <person name="Vogelstein B."/>
            <person name="Kinzler K.W."/>
            <person name="Velculescu V.E."/>
        </authorList>
    </citation>
    <scope>VARIANTS [LARGE SCALE ANALYSIS] HIS-901 AND MET-933</scope>
</reference>
<reference key="17">
    <citation type="journal article" date="2024" name="Nat. Commun.">
        <title>Cyclical palmitoylation regulates TLR9 signalling and systemic autoimmunity in mice.</title>
        <authorList>
            <person name="Ni H."/>
            <person name="Wang Y."/>
            <person name="Yao K."/>
            <person name="Wang L."/>
            <person name="Huang J."/>
            <person name="Xiao Y."/>
            <person name="Chen H."/>
            <person name="Liu B."/>
            <person name="Yang C.Y."/>
            <person name="Zhao J."/>
        </authorList>
    </citation>
    <scope>FUNCTION</scope>
    <scope>PALMITOYLATION AT CYS-258 AND CYS-265 BY ZDHHC3</scope>
    <scope>SUBCELLULAR LOCATION</scope>
</reference>
<sequence length="1032" mass="115860">MGFCRSALHPLSLLVQAIMLAMTLALGTLPAFLPCELQPHGLVNCNWLFLKSVPHFSMAAPRGNVTSLSLSSNRIHHLHDSDFAHLPSLRHLNLKWNCPPVGLSPMHFPCHMTIEPSTFLAVPTLEELNLSYNNIMTVPALPKSLISLSLSHTNILMLDSASLAGLHALRFLFMDGNCYYKNPCRQALEVAPGALLGLGNLTHLSLKYNNLTVVPRNLPSSLEYLLLSYNRIVKLAPEDLANLTALRVLDVGGNCRRCDHAPNPCMECPRHFPQLHPDTFSHLSRLEGLVLKDSSLSWLNASWFRGLGNLRVLDLSENFLYKCITKTKAFQGLTQLRKLNLSFNYQKRVSFAHLSLAPSFGSLVALKELDMHGIFFRSLDETTLRPLARLPMLQTLRLQMNFINQAQLGIFRAFPGLRYVDLSDNRISGASELTATMGEADGGEKVWLQPGDLAPAPVDTPSSEDFRPNCSTLNFTLDLSRNNLVTVQPEMFAQLSHLQCLRLSHNCISQAVNGSQFLPLTGLQVLDLSHNKLDLYHEHSFTELPRLEALDLSYNSQPFGMQGVGHNFSFVAHLRTLRHLSLAHNNIHSQVSQQLCSTSLRALDFSGNALGHMWAEGDLYLHFFQGLSGLIWLDLSQNRLHTLLPQTLRNLPKSLQVLRLRDNYLAFFKWWSLHFLPKLEVLDLAGNQLKALTNGSLPAGTRLRRLDVSCNSISFVAPGFFSKAKELRELNLSANALKTVDHSWFGPLASALQILDVSANPLHCACGAAFMDFLLEVQAAVPGLPSRVKCGSPGQLQGLSIFAQDLRLCLDEALSWDCFALSLLAVALGLGVPMLHHLCGWDLWYCFHLCLAWLPWRGRQSGRDEDALPYDAFVVFDKTQSAVADWVYNELRGQLEECRGRWALRLCLEERDWLPGKTLFENLWASVYGSRKTLFVLAHTDRVSGLLRASFLLAQQRLLEDRKDVVVLVILSPDGRRSRYVRLRQRLCRQSVLLWPHQPSGQRSFWAQLGMALTRDNHHFYNRNFCQGPTAE</sequence>